<keyword id="KW-0963">Cytoplasm</keyword>
<keyword id="KW-0968">Cytoplasmic vesicle</keyword>
<keyword id="KW-0472">Membrane</keyword>
<keyword id="KW-0532">Neurotransmitter transport</keyword>
<keyword id="KW-1185">Reference proteome</keyword>
<keyword id="KW-0813">Transport</keyword>
<reference key="1">
    <citation type="journal article" date="1998" name="Science">
        <title>Genome sequence of the nematode C. elegans: a platform for investigating biology.</title>
        <authorList>
            <consortium name="The C. elegans sequencing consortium"/>
        </authorList>
    </citation>
    <scope>NUCLEOTIDE SEQUENCE [LARGE SCALE GENOMIC DNA]</scope>
    <source>
        <strain>Bristol N2</strain>
    </source>
</reference>
<reference evidence="6" key="2">
    <citation type="journal article" date="2000" name="Mol. Biol. Cell">
        <title>The diabetes autoantigen ICA69 and its Caenorhabditis elegans homologue, ric-19, are conserved regulators of neuroendocrine secretion.</title>
        <authorList>
            <person name="Pilon M."/>
            <person name="Peng X.-R."/>
            <person name="Spence A.M."/>
            <person name="Plasterk R.H.A."/>
            <person name="Dosch H.-M."/>
        </authorList>
    </citation>
    <scope>FUNCTION</scope>
    <scope>SUBCELLULAR LOCATION</scope>
    <scope>TISSUE SPECIFICITY</scope>
    <scope>DISRUPTION PHENOTYPE</scope>
</reference>
<reference key="3">
    <citation type="journal article" date="2012" name="PLoS Genet.">
        <title>TBC-8, a putative RAB-2 GAP, regulates dense core vesicle maturation in Caenorhabditis elegans.</title>
        <authorList>
            <person name="Hannemann M."/>
            <person name="Sasidharan N."/>
            <person name="Hegermann J."/>
            <person name="Kutscher L.M."/>
            <person name="Koenig S."/>
            <person name="Eimer S."/>
        </authorList>
    </citation>
    <scope>FUNCTION</scope>
    <scope>INTERACTION WITH TBC-8</scope>
    <scope>SUBCELLULAR LOCATION</scope>
    <scope>TISSUE SPECIFICITY</scope>
</reference>
<reference key="4">
    <citation type="journal article" date="2014" name="Neuron">
        <title>Two Rab2 interactors regulate dense-core vesicle maturation.</title>
        <authorList>
            <person name="Ailion M."/>
            <person name="Hannemann M."/>
            <person name="Dalton S."/>
            <person name="Pappas A."/>
            <person name="Watanabe S."/>
            <person name="Hegermann J."/>
            <person name="Liu Q."/>
            <person name="Han H.F."/>
            <person name="Gu M."/>
            <person name="Goulding M.Q."/>
            <person name="Sasidharan N."/>
            <person name="Schuske K."/>
            <person name="Hullett P."/>
            <person name="Eimer S."/>
            <person name="Jorgensen E.M."/>
        </authorList>
    </citation>
    <scope>INTERACTION WITH RUND-1</scope>
</reference>
<dbReference type="EMBL" id="BX284601">
    <property type="protein sequence ID" value="CCD66406.1"/>
    <property type="molecule type" value="Genomic_DNA"/>
</dbReference>
<dbReference type="PIR" id="T25595">
    <property type="entry name" value="T25595"/>
</dbReference>
<dbReference type="RefSeq" id="NP_491216.2">
    <property type="nucleotide sequence ID" value="NM_058815.5"/>
</dbReference>
<dbReference type="SMR" id="P91124"/>
<dbReference type="BioGRID" id="56251">
    <property type="interactions" value="3"/>
</dbReference>
<dbReference type="FunCoup" id="P91124">
    <property type="interactions" value="1667"/>
</dbReference>
<dbReference type="STRING" id="6239.C32E8.7.1"/>
<dbReference type="iPTMnet" id="P91124"/>
<dbReference type="PaxDb" id="6239-C32E8.7"/>
<dbReference type="PeptideAtlas" id="P91124"/>
<dbReference type="EnsemblMetazoa" id="C32E8.7.1">
    <property type="protein sequence ID" value="C32E8.7.1"/>
    <property type="gene ID" value="WBGene00004368"/>
</dbReference>
<dbReference type="GeneID" id="191757"/>
<dbReference type="KEGG" id="cel:CELE_C32E8.7"/>
<dbReference type="UCSC" id="C32E8.7">
    <property type="organism name" value="c. elegans"/>
</dbReference>
<dbReference type="AGR" id="WB:WBGene00004368"/>
<dbReference type="CTD" id="191757"/>
<dbReference type="WormBase" id="C32E8.7">
    <property type="protein sequence ID" value="CE39089"/>
    <property type="gene ID" value="WBGene00004368"/>
    <property type="gene designation" value="ric-19"/>
</dbReference>
<dbReference type="eggNOG" id="KOG3891">
    <property type="taxonomic scope" value="Eukaryota"/>
</dbReference>
<dbReference type="GeneTree" id="ENSGT00390000005530"/>
<dbReference type="HOGENOM" id="CLU_037158_2_1_1"/>
<dbReference type="InParanoid" id="P91124"/>
<dbReference type="OMA" id="YVLTHYQ"/>
<dbReference type="OrthoDB" id="2126778at2759"/>
<dbReference type="PhylomeDB" id="P91124"/>
<dbReference type="PRO" id="PR:P91124"/>
<dbReference type="Proteomes" id="UP000001940">
    <property type="component" value="Chromosome I"/>
</dbReference>
<dbReference type="Bgee" id="WBGene00004368">
    <property type="expression patterns" value="Expressed in pharyngeal muscle cell (C elegans) and 3 other cell types or tissues"/>
</dbReference>
<dbReference type="GO" id="GO:0005737">
    <property type="term" value="C:cytoplasm"/>
    <property type="evidence" value="ECO:0000314"/>
    <property type="project" value="UniProtKB"/>
</dbReference>
<dbReference type="GO" id="GO:0030659">
    <property type="term" value="C:cytoplasmic vesicle membrane"/>
    <property type="evidence" value="ECO:0007669"/>
    <property type="project" value="UniProtKB-SubCell"/>
</dbReference>
<dbReference type="GO" id="GO:0005794">
    <property type="term" value="C:Golgi apparatus"/>
    <property type="evidence" value="ECO:0000314"/>
    <property type="project" value="WormBase"/>
</dbReference>
<dbReference type="GO" id="GO:0019904">
    <property type="term" value="F:protein domain specific binding"/>
    <property type="evidence" value="ECO:0007669"/>
    <property type="project" value="InterPro"/>
</dbReference>
<dbReference type="GO" id="GO:0031267">
    <property type="term" value="F:small GTPase binding"/>
    <property type="evidence" value="ECO:0000353"/>
    <property type="project" value="WormBase"/>
</dbReference>
<dbReference type="GO" id="GO:1990502">
    <property type="term" value="P:dense core granule maturation"/>
    <property type="evidence" value="ECO:0000315"/>
    <property type="project" value="WormBase"/>
</dbReference>
<dbReference type="GO" id="GO:0006836">
    <property type="term" value="P:neurotransmitter transport"/>
    <property type="evidence" value="ECO:0007669"/>
    <property type="project" value="UniProtKB-KW"/>
</dbReference>
<dbReference type="GO" id="GO:0090325">
    <property type="term" value="P:regulation of locomotion involved in locomotory behavior"/>
    <property type="evidence" value="ECO:0000316"/>
    <property type="project" value="WormBase"/>
</dbReference>
<dbReference type="GO" id="GO:0046928">
    <property type="term" value="P:regulation of neurotransmitter secretion"/>
    <property type="evidence" value="ECO:0000315"/>
    <property type="project" value="UniProtKB"/>
</dbReference>
<dbReference type="GO" id="GO:0051049">
    <property type="term" value="P:regulation of transport"/>
    <property type="evidence" value="ECO:0000318"/>
    <property type="project" value="GO_Central"/>
</dbReference>
<dbReference type="FunFam" id="1.20.1270.60:FF:000068">
    <property type="entry name" value="Islet cell autoantigen"/>
    <property type="match status" value="1"/>
</dbReference>
<dbReference type="Gene3D" id="1.20.1270.60">
    <property type="entry name" value="Arfaptin homology (AH) domain/BAR domain"/>
    <property type="match status" value="1"/>
</dbReference>
<dbReference type="InterPro" id="IPR027267">
    <property type="entry name" value="AH/BAR_dom_sf"/>
</dbReference>
<dbReference type="InterPro" id="IPR010504">
    <property type="entry name" value="AH_dom"/>
</dbReference>
<dbReference type="InterPro" id="IPR024114">
    <property type="entry name" value="Islet_autoAg_Ica1/Ica1-like"/>
</dbReference>
<dbReference type="PANTHER" id="PTHR10164:SF4">
    <property type="entry name" value="GH23156P"/>
    <property type="match status" value="1"/>
</dbReference>
<dbReference type="PANTHER" id="PTHR10164">
    <property type="entry name" value="ISLET CELL AUTOANTIGEN 1"/>
    <property type="match status" value="1"/>
</dbReference>
<dbReference type="Pfam" id="PF06456">
    <property type="entry name" value="Arfaptin"/>
    <property type="match status" value="1"/>
</dbReference>
<dbReference type="SMART" id="SM01015">
    <property type="entry name" value="Arfaptin"/>
    <property type="match status" value="1"/>
</dbReference>
<dbReference type="SUPFAM" id="SSF103657">
    <property type="entry name" value="BAR/IMD domain-like"/>
    <property type="match status" value="1"/>
</dbReference>
<dbReference type="PROSITE" id="PS50870">
    <property type="entry name" value="AH"/>
    <property type="match status" value="1"/>
</dbReference>
<organism>
    <name type="scientific">Caenorhabditis elegans</name>
    <dbReference type="NCBI Taxonomy" id="6239"/>
    <lineage>
        <taxon>Eukaryota</taxon>
        <taxon>Metazoa</taxon>
        <taxon>Ecdysozoa</taxon>
        <taxon>Nematoda</taxon>
        <taxon>Chromadorea</taxon>
        <taxon>Rhabditida</taxon>
        <taxon>Rhabditina</taxon>
        <taxon>Rhabditomorpha</taxon>
        <taxon>Rhabditoidea</taxon>
        <taxon>Rhabditidae</taxon>
        <taxon>Peloderinae</taxon>
        <taxon>Caenorhabditis</taxon>
    </lineage>
</organism>
<comment type="function">
    <text evidence="3 4">May be involved in neurotransmitter secretion (PubMed:11029035). In association with the GTPase activator protein tbc-8 activates rab-2 during dense core vesicle maturation in cholinergic motoneurons (PubMed:22654674).</text>
</comment>
<comment type="subunit">
    <text evidence="4 5">Interacts with the GTPase activator protein tbc-8; the interaction is direct and may be required for the activation of rab-2 and dense vesicle maturation in cholinergic motoneurons (PubMed:22654674). Interacts with rund-1 (PubMed:24698274).</text>
</comment>
<comment type="subcellular location">
    <subcellularLocation>
        <location evidence="3">Cytoplasm</location>
    </subcellularLocation>
    <subcellularLocation>
        <location evidence="4">Cytoplasmic vesicle membrane</location>
        <topology evidence="4">Peripheral membrane protein</topology>
    </subcellularLocation>
    <text evidence="4">Co-localizes with tbc-8 at cytoplasmic vesicle membranes in neurons.</text>
</comment>
<comment type="tissue specificity">
    <text evidence="3 4">Expressed in all neurons (PubMed:11029035, PubMed:22654674). Highly expressed in m2 pharyngeal neurons and some pharyngeal interneurons (PubMed:11029035). Also expressed in the excretory canal and the gland cells located just below the nerve ring in the head (PubMed:11029035).</text>
</comment>
<comment type="disruption phenotype">
    <text evidence="3">Mutants are resistant to aldicarb, an inhibitor of acetylcholinesterase.</text>
</comment>
<gene>
    <name evidence="7" type="primary">ric-19</name>
    <name evidence="7" type="ORF">C32E8.7</name>
</gene>
<accession>P91124</accession>
<feature type="chain" id="PRO_0000097331" description="Resistance to inhibitors of cholinesterase protein 19">
    <location>
        <begin position="1"/>
        <end position="430"/>
    </location>
</feature>
<feature type="domain" description="AH" evidence="1">
    <location>
        <begin position="56"/>
        <end position="260"/>
    </location>
</feature>
<feature type="region of interest" description="Disordered" evidence="2">
    <location>
        <begin position="279"/>
        <end position="342"/>
    </location>
</feature>
<feature type="compositionally biased region" description="Basic and acidic residues" evidence="2">
    <location>
        <begin position="281"/>
        <end position="294"/>
    </location>
</feature>
<protein>
    <recommendedName>
        <fullName>Resistance to inhibitors of cholinesterase protein 19</fullName>
    </recommendedName>
    <alternativeName>
        <fullName>ICA1 homolog</fullName>
    </alternativeName>
</protein>
<sequence length="430" mass="48906">MAAQFYERNTSGMNADRFMTRLTDESTVNTMQRHYWTARQFIRTKLGKKEDEHLEASDNELDTCLNLYRSVHGTSFQLLNNVDNYANFLLDETLVQNVLGKYLKEKGKIDKTEAVGRILIAVGRSLLFSSHRLNAARIGVSTFYNKLSVFVERAIGDCSQTIEAVQMCRTEYRGSLLWMKKTSEELDPEVDGSMEKFREAQTTVKSNKERLDRLKTDTLQKVDLLSASRSNLLSYVLTHYQNELYEYYSKTSRAFETLAENINCYNNYDFEILSHLATGTKPERERKSEKEESAKTSQPRGNEEELKNLLFGRESPQFGEEEVQDESRSQCDSPLIEDVDDERRKTGDLLDLESAASIAFPIGPLATLFDTSSFVPPILPPPKPNAVSDDILSLFDGNKANSSGKEASATTMDWQSLIDGFDRENEDNLL</sequence>
<proteinExistence type="evidence at protein level"/>
<name>RIC19_CAEEL</name>
<evidence type="ECO:0000255" key="1">
    <source>
        <dbReference type="PROSITE-ProRule" id="PRU00294"/>
    </source>
</evidence>
<evidence type="ECO:0000256" key="2">
    <source>
        <dbReference type="SAM" id="MobiDB-lite"/>
    </source>
</evidence>
<evidence type="ECO:0000269" key="3">
    <source>
    </source>
</evidence>
<evidence type="ECO:0000269" key="4">
    <source>
    </source>
</evidence>
<evidence type="ECO:0000269" key="5">
    <source>
    </source>
</evidence>
<evidence type="ECO:0000305" key="6"/>
<evidence type="ECO:0000312" key="7">
    <source>
        <dbReference type="WormBase" id="C32E8.7"/>
    </source>
</evidence>